<organism>
    <name type="scientific">Saccharolobus shibatae (strain ATCC 51178 / DSM 5389 / JCM 8931 / NBRC 15437 / B12)</name>
    <name type="common">Sulfolobus shibatae</name>
    <dbReference type="NCBI Taxonomy" id="523848"/>
    <lineage>
        <taxon>Archaea</taxon>
        <taxon>Thermoproteota</taxon>
        <taxon>Thermoprotei</taxon>
        <taxon>Sulfolobales</taxon>
        <taxon>Sulfolobaceae</taxon>
        <taxon>Saccharolobus</taxon>
    </lineage>
</organism>
<name>TOP6A_SACSH</name>
<dbReference type="EC" id="5.6.2.2" evidence="1 7"/>
<dbReference type="EMBL" id="Y10582">
    <property type="protein sequence ID" value="CAA71605.1"/>
    <property type="molecule type" value="Genomic_DNA"/>
</dbReference>
<dbReference type="EMBL" id="CP077717">
    <property type="protein sequence ID" value="QXJ29634.1"/>
    <property type="molecule type" value="Genomic_DNA"/>
</dbReference>
<dbReference type="PDB" id="2ZBK">
    <property type="method" value="X-ray"/>
    <property type="resolution" value="3.56 A"/>
    <property type="chains" value="A/C/E/G=1-389"/>
</dbReference>
<dbReference type="PDBsum" id="2ZBK"/>
<dbReference type="SMR" id="O05208"/>
<dbReference type="DIP" id="DIP-29417N"/>
<dbReference type="IntAct" id="O05208">
    <property type="interactions" value="1"/>
</dbReference>
<dbReference type="KEGG" id="sshi:J5U23_02507"/>
<dbReference type="OrthoDB" id="5866at2157"/>
<dbReference type="BRENDA" id="5.6.2.2">
    <property type="organism ID" value="6162"/>
</dbReference>
<dbReference type="EvolutionaryTrace" id="O05208"/>
<dbReference type="Proteomes" id="UP000694018">
    <property type="component" value="Chromosome"/>
</dbReference>
<dbReference type="GO" id="GO:0005694">
    <property type="term" value="C:chromosome"/>
    <property type="evidence" value="ECO:0007669"/>
    <property type="project" value="InterPro"/>
</dbReference>
<dbReference type="GO" id="GO:0009330">
    <property type="term" value="C:DNA topoisomerase type II (double strand cut, ATP-hydrolyzing) complex"/>
    <property type="evidence" value="ECO:0000314"/>
    <property type="project" value="UniProtKB"/>
</dbReference>
<dbReference type="GO" id="GO:0005524">
    <property type="term" value="F:ATP binding"/>
    <property type="evidence" value="ECO:0007669"/>
    <property type="project" value="UniProtKB-KW"/>
</dbReference>
<dbReference type="GO" id="GO:0003677">
    <property type="term" value="F:DNA binding"/>
    <property type="evidence" value="ECO:0007669"/>
    <property type="project" value="UniProtKB-UniRule"/>
</dbReference>
<dbReference type="GO" id="GO:0003918">
    <property type="term" value="F:DNA topoisomerase type II (double strand cut, ATP-hydrolyzing) activity"/>
    <property type="evidence" value="ECO:0007669"/>
    <property type="project" value="UniProtKB-UniRule"/>
</dbReference>
<dbReference type="GO" id="GO:0000287">
    <property type="term" value="F:magnesium ion binding"/>
    <property type="evidence" value="ECO:0007669"/>
    <property type="project" value="UniProtKB-UniRule"/>
</dbReference>
<dbReference type="GO" id="GO:0006265">
    <property type="term" value="P:DNA topological change"/>
    <property type="evidence" value="ECO:0007669"/>
    <property type="project" value="UniProtKB-UniRule"/>
</dbReference>
<dbReference type="CDD" id="cd00223">
    <property type="entry name" value="TOPRIM_TopoIIB_SPO"/>
    <property type="match status" value="1"/>
</dbReference>
<dbReference type="FunFam" id="1.10.10.10:FF:000655">
    <property type="entry name" value="Type 2 DNA topoisomerase 6 subunit A"/>
    <property type="match status" value="1"/>
</dbReference>
<dbReference type="FunFam" id="3.40.1360.10:FF:000011">
    <property type="entry name" value="Type 2 DNA topoisomerase 6 subunit A"/>
    <property type="match status" value="1"/>
</dbReference>
<dbReference type="Gene3D" id="3.40.1360.10">
    <property type="match status" value="1"/>
</dbReference>
<dbReference type="Gene3D" id="1.10.10.10">
    <property type="entry name" value="Winged helix-like DNA-binding domain superfamily/Winged helix DNA-binding domain"/>
    <property type="match status" value="1"/>
</dbReference>
<dbReference type="HAMAP" id="MF_00132">
    <property type="entry name" value="Top6A"/>
    <property type="match status" value="1"/>
</dbReference>
<dbReference type="InterPro" id="IPR002815">
    <property type="entry name" value="Spo11/TopoVI_A"/>
</dbReference>
<dbReference type="InterPro" id="IPR013049">
    <property type="entry name" value="Spo11/TopoVI_A_N"/>
</dbReference>
<dbReference type="InterPro" id="IPR036078">
    <property type="entry name" value="Spo11/TopoVI_A_sf"/>
</dbReference>
<dbReference type="InterPro" id="IPR049333">
    <property type="entry name" value="Topo_VI_alpha"/>
</dbReference>
<dbReference type="InterPro" id="IPR004085">
    <property type="entry name" value="TopoVI_A"/>
</dbReference>
<dbReference type="InterPro" id="IPR034136">
    <property type="entry name" value="TOPRIM_Topo6A/Spo11"/>
</dbReference>
<dbReference type="InterPro" id="IPR036388">
    <property type="entry name" value="WH-like_DNA-bd_sf"/>
</dbReference>
<dbReference type="NCBIfam" id="NF003336">
    <property type="entry name" value="PRK04342.1-5"/>
    <property type="match status" value="1"/>
</dbReference>
<dbReference type="PANTHER" id="PTHR10848">
    <property type="entry name" value="MEIOTIC RECOMBINATION PROTEIN SPO11"/>
    <property type="match status" value="1"/>
</dbReference>
<dbReference type="PANTHER" id="PTHR10848:SF0">
    <property type="entry name" value="MEIOTIC RECOMBINATION PROTEIN SPO11"/>
    <property type="match status" value="1"/>
</dbReference>
<dbReference type="Pfam" id="PF21180">
    <property type="entry name" value="TOP6A-Spo11_Toprim"/>
    <property type="match status" value="1"/>
</dbReference>
<dbReference type="Pfam" id="PF20768">
    <property type="entry name" value="Topo_VI_alpha"/>
    <property type="match status" value="1"/>
</dbReference>
<dbReference type="Pfam" id="PF04406">
    <property type="entry name" value="TP6A_N"/>
    <property type="match status" value="1"/>
</dbReference>
<dbReference type="PRINTS" id="PR01550">
    <property type="entry name" value="TOP6AFAMILY"/>
</dbReference>
<dbReference type="PRINTS" id="PR01552">
    <property type="entry name" value="TPISMRASE6A"/>
</dbReference>
<dbReference type="SUPFAM" id="SSF56726">
    <property type="entry name" value="DNA topoisomerase IV, alpha subunit"/>
    <property type="match status" value="1"/>
</dbReference>
<dbReference type="PROSITE" id="PS52041">
    <property type="entry name" value="TOPO_IIB"/>
    <property type="match status" value="1"/>
</dbReference>
<proteinExistence type="evidence at protein level"/>
<protein>
    <recommendedName>
        <fullName evidence="1">Type 2 DNA topoisomerase 6 subunit A</fullName>
        <ecNumber evidence="1 7">5.6.2.2</ecNumber>
    </recommendedName>
    <alternativeName>
        <fullName evidence="1">Type II DNA topoisomerase VI subunit A</fullName>
    </alternativeName>
</protein>
<reference key="1">
    <citation type="journal article" date="1997" name="Nature">
        <title>An atypical topoisomerase II from Archaea with implications for meiotic recombination.</title>
        <authorList>
            <person name="Bergerat A."/>
            <person name="de Massy B."/>
            <person name="Gadelle D."/>
            <person name="Varoutas P.-C."/>
            <person name="Nicolas A."/>
            <person name="Forterre P."/>
        </authorList>
    </citation>
    <scope>NUCLEOTIDE SEQUENCE [GENOMIC DNA]</scope>
    <scope>PROTEIN SEQUENCE OF 212-221 AND 344-352</scope>
    <source>
        <strain>ATCC 51178 / DSM 5389 / JCM 8931 / NBRC 15437 / B12</strain>
    </source>
</reference>
<reference evidence="8" key="2">
    <citation type="journal article" date="2021" name="Environ. Microbiol.">
        <title>New insights into the diversity and evolution of the archaeal mobilome from three complete genomes of Saccharolobus shibatae.</title>
        <authorList>
            <person name="Medvedeva S."/>
            <person name="Brandt D."/>
            <person name="Cvirkaite-Krupovic V."/>
            <person name="Liu Y."/>
            <person name="Severinov K."/>
            <person name="Ishino S."/>
            <person name="Ishino Y."/>
            <person name="Prangishvili D."/>
            <person name="Kalinowski J."/>
            <person name="Krupovic M."/>
        </authorList>
    </citation>
    <scope>NUCLEOTIDE SEQUENCE [LARGE SCALE GENOMIC DNA]</scope>
    <source>
        <strain>ATCC 51178 / DSM 5389 / JCM 8931 / NBRC 15437 / B12</strain>
    </source>
</reference>
<reference key="3">
    <citation type="journal article" date="1994" name="J. Biol. Chem.">
        <title>Purification of a DNA topoisomerase II from the hyperthermophilic archaeon Sulfolobus shibatae. A thermostable enzyme with both bacterial and eucaryal features.</title>
        <authorList>
            <person name="Bergerat A."/>
            <person name="Gadelle D."/>
            <person name="Forterre P."/>
        </authorList>
    </citation>
    <scope>FUNCTION</scope>
    <scope>COFACTOR</scope>
    <scope>BIOPHYSICOCHEMICAL PROPERTIES</scope>
    <scope>ACTIVITY REGULATION</scope>
    <scope>SUBUNIT</scope>
    <source>
        <strain>ATCC 51178 / DSM 5389 / JCM 8931 / NBRC 15437 / B12</strain>
    </source>
</reference>
<reference key="4">
    <citation type="journal article" date="2001" name="J. Biol. Chem.">
        <title>DNA topoisomerase VI generates ATP-dependent double-strand breaks with two-nucleotide overhangs.</title>
        <authorList>
            <person name="Buhler C."/>
            <person name="Lebbink J.H."/>
            <person name="Bocs C."/>
            <person name="Ladenstein R."/>
            <person name="Forterre P."/>
        </authorList>
    </citation>
    <scope>FUNCTION</scope>
    <scope>COFACTOR</scope>
    <scope>SUBUNIT</scope>
    <scope>PROBABLE ACTIVE SITE</scope>
</reference>
<reference evidence="9" key="5">
    <citation type="journal article" date="2008" name="Structure">
        <title>Crystal structure of an intact type II DNA topoisomerase: insights into DNA transfer mechanisms.</title>
        <authorList>
            <person name="Graille M."/>
            <person name="Cladiere L."/>
            <person name="Durand D."/>
            <person name="Lecointe F."/>
            <person name="Gadelle D."/>
            <person name="Quevillon-Cheruel S."/>
            <person name="Vachette P."/>
            <person name="Forterre P."/>
            <person name="van Tilbeurgh H."/>
        </authorList>
    </citation>
    <scope>X-RAY CRYSTALLOGRAPHY (3.56 ANGSTROMS) IN COMPLEX WITH TOP6B AND RADICICOL</scope>
    <scope>SUBUNIT</scope>
</reference>
<evidence type="ECO:0000255" key="1">
    <source>
        <dbReference type="HAMAP-Rule" id="MF_00132"/>
    </source>
</evidence>
<evidence type="ECO:0000255" key="2">
    <source>
        <dbReference type="PROSITE-ProRule" id="PRU01385"/>
    </source>
</evidence>
<evidence type="ECO:0000269" key="3">
    <source>
    </source>
</evidence>
<evidence type="ECO:0000269" key="4">
    <source>
    </source>
</evidence>
<evidence type="ECO:0000269" key="5">
    <source>
    </source>
</evidence>
<evidence type="ECO:0000305" key="6">
    <source>
    </source>
</evidence>
<evidence type="ECO:0000305" key="7">
    <source>
    </source>
</evidence>
<evidence type="ECO:0000312" key="8">
    <source>
        <dbReference type="EMBL" id="QXJ29634.1"/>
    </source>
</evidence>
<evidence type="ECO:0007744" key="9">
    <source>
        <dbReference type="PDB" id="2ZBK"/>
    </source>
</evidence>
<sequence length="389" mass="45055">MSSEFISKVDKEARRKAANILRDKFLNLVEQLKKGEPLVMEIPMRTLSNAIYDEKRKLLLLGEKKLRRNFLDLNEAKRFMQTVLMASIIYDALVSDEYPTIRDLYYRGKHSLLLKSIEGNKIVSEENTWDEQKESDSVIVDIEVFTSLLREEMLILSKEKGKVVGNLRIRSGNDVIDLSKTGHGAYAIEPTPDLIDFIDVDAEFVLVVEKDAVFQQLHRAGFWKQYKSILITSAGQPDRATRRFVRRLNEELKLPVYILTDADPYGWYIFSVFRIGSISLSYESERLATPDAKFLGVSMGDIFGNSRKKPYLSEAERKNYIIKAKDADIKRAEEIKNYEWFKTKAWQEEINTFLQRKAKLEIEAMASKGLKFLAFQYIPEKITNKDYIA</sequence>
<accession>O05208</accession>
<accession>A0A8F5BQT4</accession>
<comment type="function">
    <text evidence="3 5">Relaxes both positive and negative supercoils and exhibits a strong decatenase and unknotting activity; it cannot introduce DNA supercoils (PubMed:7961685). ATP is absolutely required for DNA cleavage; the nonhydrolyzable analog AMP-PNP generates nicked or linear products from a supercoiled dsDNA substrate. Generates staggered two-nucleotide long 5' overhangs. The enzyme is covalently attached transiently to the 5'-ends of the cleaved strands (PubMed:11485995).</text>
</comment>
<comment type="catalytic activity">
    <reaction evidence="1 7">
        <text>ATP-dependent breakage, passage and rejoining of double-stranded DNA.</text>
        <dbReference type="EC" id="5.6.2.2"/>
    </reaction>
</comment>
<comment type="cofactor">
    <cofactor evidence="1 3 5">
        <name>Mg(2+)</name>
        <dbReference type="ChEBI" id="CHEBI:18420"/>
    </cofactor>
</comment>
<comment type="activity regulation">
    <text evidence="5">Not inhibited by the DNA gyrase inhibitor novobiocin, instead inhibited by eukaryotic topoisomerase inhibitors such as m- and o-amsacrine, ellipticine, and the quinolone CP-115,953 (PubMed:7961685).</text>
</comment>
<comment type="biophysicochemical properties">
    <temperatureDependence>
        <text evidence="5">Optimum temperature is 70-80 degrees Celsius.</text>
    </temperatureDependence>
</comment>
<comment type="subunit">
    <text evidence="1 3 4 5">Homodimer. Heterotetramer of two Top6A and two Top6B chains.</text>
</comment>
<comment type="interaction">
    <interactant intactId="EBI-6430603">
        <id>O05208</id>
    </interactant>
    <interactant intactId="EBI-9026762">
        <id>O05207</id>
        <label>top6B</label>
    </interactant>
    <organismsDiffer>false</organismsDiffer>
    <experiments>5</experiments>
</comment>
<comment type="similarity">
    <text evidence="1">Belongs to the TOP6A family.</text>
</comment>
<gene>
    <name evidence="1" type="primary">top6A</name>
    <name evidence="8" type="ORF">J5U23_02507</name>
</gene>
<keyword id="KW-0002">3D-structure</keyword>
<keyword id="KW-0067">ATP-binding</keyword>
<keyword id="KW-0903">Direct protein sequencing</keyword>
<keyword id="KW-0238">DNA-binding</keyword>
<keyword id="KW-0413">Isomerase</keyword>
<keyword id="KW-0460">Magnesium</keyword>
<keyword id="KW-0479">Metal-binding</keyword>
<keyword id="KW-0547">Nucleotide-binding</keyword>
<keyword id="KW-0799">Topoisomerase</keyword>
<feature type="chain" id="PRO_0000145456" description="Type 2 DNA topoisomerase 6 subunit A">
    <location>
        <begin position="1"/>
        <end position="389"/>
    </location>
</feature>
<feature type="domain" description="Topo IIA-type catalytic" evidence="2">
    <location>
        <begin position="12"/>
        <end position="162"/>
    </location>
</feature>
<feature type="active site" description="O-(5'-phospho-DNA)-tyrosine intermediate" evidence="2 6">
    <location>
        <position position="106"/>
    </location>
</feature>
<feature type="binding site" evidence="1">
    <location>
        <position position="209"/>
    </location>
    <ligand>
        <name>Mg(2+)</name>
        <dbReference type="ChEBI" id="CHEBI:18420"/>
    </ligand>
</feature>
<feature type="binding site" evidence="1">
    <location>
        <position position="261"/>
    </location>
    <ligand>
        <name>Mg(2+)</name>
        <dbReference type="ChEBI" id="CHEBI:18420"/>
    </ligand>
</feature>